<dbReference type="EC" id="4.2.1.33" evidence="1"/>
<dbReference type="EMBL" id="CP000504">
    <property type="protein sequence ID" value="ABL88955.1"/>
    <property type="molecule type" value="Genomic_DNA"/>
</dbReference>
<dbReference type="RefSeq" id="WP_011763530.1">
    <property type="nucleotide sequence ID" value="NC_008701.1"/>
</dbReference>
<dbReference type="SMR" id="A1RVH3"/>
<dbReference type="STRING" id="384616.Pisl_1806"/>
<dbReference type="GeneID" id="4616859"/>
<dbReference type="KEGG" id="pis:Pisl_1806"/>
<dbReference type="eggNOG" id="arCOG01698">
    <property type="taxonomic scope" value="Archaea"/>
</dbReference>
<dbReference type="HOGENOM" id="CLU_006714_3_4_2"/>
<dbReference type="OrthoDB" id="255at2157"/>
<dbReference type="UniPathway" id="UPA00048">
    <property type="reaction ID" value="UER00071"/>
</dbReference>
<dbReference type="Proteomes" id="UP000002595">
    <property type="component" value="Chromosome"/>
</dbReference>
<dbReference type="GO" id="GO:0003861">
    <property type="term" value="F:3-isopropylmalate dehydratase activity"/>
    <property type="evidence" value="ECO:0007669"/>
    <property type="project" value="UniProtKB-UniRule"/>
</dbReference>
<dbReference type="GO" id="GO:0051539">
    <property type="term" value="F:4 iron, 4 sulfur cluster binding"/>
    <property type="evidence" value="ECO:0007669"/>
    <property type="project" value="UniProtKB-KW"/>
</dbReference>
<dbReference type="GO" id="GO:0046872">
    <property type="term" value="F:metal ion binding"/>
    <property type="evidence" value="ECO:0007669"/>
    <property type="project" value="UniProtKB-KW"/>
</dbReference>
<dbReference type="GO" id="GO:0009098">
    <property type="term" value="P:L-leucine biosynthetic process"/>
    <property type="evidence" value="ECO:0007669"/>
    <property type="project" value="UniProtKB-UniRule"/>
</dbReference>
<dbReference type="Gene3D" id="3.30.499.10">
    <property type="entry name" value="Aconitase, domain 3"/>
    <property type="match status" value="2"/>
</dbReference>
<dbReference type="HAMAP" id="MF_01027">
    <property type="entry name" value="LeuC_type2"/>
    <property type="match status" value="1"/>
</dbReference>
<dbReference type="InterPro" id="IPR015931">
    <property type="entry name" value="Acnase/IPM_dHydase_lsu_aba_1/3"/>
</dbReference>
<dbReference type="InterPro" id="IPR001030">
    <property type="entry name" value="Acoase/IPM_deHydtase_lsu_aba"/>
</dbReference>
<dbReference type="InterPro" id="IPR018136">
    <property type="entry name" value="Aconitase_4Fe-4S_BS"/>
</dbReference>
<dbReference type="InterPro" id="IPR036008">
    <property type="entry name" value="Aconitase_4Fe-4S_dom"/>
</dbReference>
<dbReference type="InterPro" id="IPR011826">
    <property type="entry name" value="HAcnase/IPMdehydase_lsu_prok"/>
</dbReference>
<dbReference type="InterPro" id="IPR006251">
    <property type="entry name" value="Homoacnase/IPMdehydase_lsu"/>
</dbReference>
<dbReference type="InterPro" id="IPR050067">
    <property type="entry name" value="IPM_dehydratase_rel_enz"/>
</dbReference>
<dbReference type="NCBIfam" id="TIGR01343">
    <property type="entry name" value="hacA_fam"/>
    <property type="match status" value="1"/>
</dbReference>
<dbReference type="NCBIfam" id="TIGR02086">
    <property type="entry name" value="IPMI_arch"/>
    <property type="match status" value="1"/>
</dbReference>
<dbReference type="NCBIfam" id="NF001614">
    <property type="entry name" value="PRK00402.1"/>
    <property type="match status" value="1"/>
</dbReference>
<dbReference type="PANTHER" id="PTHR43822:SF2">
    <property type="entry name" value="HOMOACONITASE, MITOCHONDRIAL"/>
    <property type="match status" value="1"/>
</dbReference>
<dbReference type="PANTHER" id="PTHR43822">
    <property type="entry name" value="HOMOACONITASE, MITOCHONDRIAL-RELATED"/>
    <property type="match status" value="1"/>
</dbReference>
<dbReference type="Pfam" id="PF00330">
    <property type="entry name" value="Aconitase"/>
    <property type="match status" value="2"/>
</dbReference>
<dbReference type="PRINTS" id="PR00415">
    <property type="entry name" value="ACONITASE"/>
</dbReference>
<dbReference type="SUPFAM" id="SSF53732">
    <property type="entry name" value="Aconitase iron-sulfur domain"/>
    <property type="match status" value="1"/>
</dbReference>
<dbReference type="PROSITE" id="PS01244">
    <property type="entry name" value="ACONITASE_2"/>
    <property type="match status" value="1"/>
</dbReference>
<proteinExistence type="inferred from homology"/>
<name>LEUC_PYRIL</name>
<evidence type="ECO:0000255" key="1">
    <source>
        <dbReference type="HAMAP-Rule" id="MF_01027"/>
    </source>
</evidence>
<organism>
    <name type="scientific">Pyrobaculum islandicum (strain DSM 4184 / JCM 9189 / GEO3)</name>
    <dbReference type="NCBI Taxonomy" id="384616"/>
    <lineage>
        <taxon>Archaea</taxon>
        <taxon>Thermoproteota</taxon>
        <taxon>Thermoprotei</taxon>
        <taxon>Thermoproteales</taxon>
        <taxon>Thermoproteaceae</taxon>
        <taxon>Pyrobaculum</taxon>
    </lineage>
</organism>
<accession>A1RVH3</accession>
<feature type="chain" id="PRO_1000063654" description="3-isopropylmalate dehydratase large subunit">
    <location>
        <begin position="1"/>
        <end position="414"/>
    </location>
</feature>
<feature type="binding site" evidence="1">
    <location>
        <position position="295"/>
    </location>
    <ligand>
        <name>[4Fe-4S] cluster</name>
        <dbReference type="ChEBI" id="CHEBI:49883"/>
    </ligand>
</feature>
<feature type="binding site" evidence="1">
    <location>
        <position position="353"/>
    </location>
    <ligand>
        <name>[4Fe-4S] cluster</name>
        <dbReference type="ChEBI" id="CHEBI:49883"/>
    </ligand>
</feature>
<feature type="binding site" evidence="1">
    <location>
        <position position="356"/>
    </location>
    <ligand>
        <name>[4Fe-4S] cluster</name>
        <dbReference type="ChEBI" id="CHEBI:49883"/>
    </ligand>
</feature>
<keyword id="KW-0004">4Fe-4S</keyword>
<keyword id="KW-0028">Amino-acid biosynthesis</keyword>
<keyword id="KW-0100">Branched-chain amino acid biosynthesis</keyword>
<keyword id="KW-0408">Iron</keyword>
<keyword id="KW-0411">Iron-sulfur</keyword>
<keyword id="KW-0432">Leucine biosynthesis</keyword>
<keyword id="KW-0456">Lyase</keyword>
<keyword id="KW-0479">Metal-binding</keyword>
<protein>
    <recommendedName>
        <fullName evidence="1">3-isopropylmalate dehydratase large subunit</fullName>
        <ecNumber evidence="1">4.2.1.33</ecNumber>
    </recommendedName>
    <alternativeName>
        <fullName evidence="1">Alpha-IPM isomerase</fullName>
        <shortName evidence="1">IPMI</shortName>
    </alternativeName>
    <alternativeName>
        <fullName evidence="1">Isopropylmalate isomerase</fullName>
    </alternativeName>
</protein>
<gene>
    <name evidence="1" type="primary">leuC</name>
    <name type="ordered locus">Pisl_1806</name>
</gene>
<reference key="1">
    <citation type="submission" date="2006-12" db="EMBL/GenBank/DDBJ databases">
        <title>Complete sequence of Pyrobaculum islandicum DSM 4184.</title>
        <authorList>
            <person name="Copeland A."/>
            <person name="Lucas S."/>
            <person name="Lapidus A."/>
            <person name="Barry K."/>
            <person name="Detter J.C."/>
            <person name="Glavina del Rio T."/>
            <person name="Dalin E."/>
            <person name="Tice H."/>
            <person name="Pitluck S."/>
            <person name="Meincke L."/>
            <person name="Brettin T."/>
            <person name="Bruce D."/>
            <person name="Han C."/>
            <person name="Tapia R."/>
            <person name="Gilna P."/>
            <person name="Schmutz J."/>
            <person name="Larimer F."/>
            <person name="Land M."/>
            <person name="Hauser L."/>
            <person name="Kyrpides N."/>
            <person name="Mikhailova N."/>
            <person name="Cozen A.E."/>
            <person name="Fitz-Gibbon S.T."/>
            <person name="House C.H."/>
            <person name="Saltikov C."/>
            <person name="Lowe T."/>
            <person name="Richardson P."/>
        </authorList>
    </citation>
    <scope>NUCLEOTIDE SEQUENCE [LARGE SCALE GENOMIC DNA]</scope>
    <source>
        <strain>DSM 4184 / JCM 9189 / GEO3</strain>
    </source>
</reference>
<sequence length="414" mass="45069">MPTWTEYIFQKKLGHTPSPGDVVEVVPDLVGFHDLTGYHVLEVLESMGKVEVFDKERVVVAFDHLSPPPTQRAAEIMVYIRKHVKALELPHFYDVGGGILHQIILEKYAMPEYVIFAADSHTNTAGAVGAFAHGMGATDIAAALKLGKTWVVIPAPFRVDMKGEFPPGVMGKDVALHLLKQFGAEGFNGYSVEVFVEIPKAFPMDDRATVANMSTEMGADALMFIPDVVTVDYLQRERGVSYKPPDLQPGRYVDKYVVELSKLEPLVAAPYSVDNVKAVREVEGVEVDQVFIGSCTNGRLSDFEIAARILRRGRVKSRCIAIPASYTIFRKALELGYIDILTKAGCVVTYGTCGPCLGGHFGVAGPGEVVVSTSNRNFKGRMGHPDSKVYLANPATAAAAALEGKIVDPRPYLL</sequence>
<comment type="function">
    <text evidence="1">Catalyzes the isomerization between 2-isopropylmalate and 3-isopropylmalate, via the formation of 2-isopropylmaleate.</text>
</comment>
<comment type="catalytic activity">
    <reaction evidence="1">
        <text>(2R,3S)-3-isopropylmalate = (2S)-2-isopropylmalate</text>
        <dbReference type="Rhea" id="RHEA:32287"/>
        <dbReference type="ChEBI" id="CHEBI:1178"/>
        <dbReference type="ChEBI" id="CHEBI:35121"/>
        <dbReference type="EC" id="4.2.1.33"/>
    </reaction>
</comment>
<comment type="cofactor">
    <cofactor evidence="1">
        <name>[4Fe-4S] cluster</name>
        <dbReference type="ChEBI" id="CHEBI:49883"/>
    </cofactor>
    <text evidence="1">Binds 1 [4Fe-4S] cluster per subunit.</text>
</comment>
<comment type="pathway">
    <text evidence="1">Amino-acid biosynthesis; L-leucine biosynthesis; L-leucine from 3-methyl-2-oxobutanoate: step 2/4.</text>
</comment>
<comment type="subunit">
    <text evidence="1">Heterodimer of LeuC and LeuD.</text>
</comment>
<comment type="similarity">
    <text evidence="1">Belongs to the aconitase/IPM isomerase family. LeuC type 2 subfamily.</text>
</comment>